<proteinExistence type="inferred from homology"/>
<dbReference type="EC" id="2.3.1.234" evidence="1"/>
<dbReference type="EMBL" id="CP001463">
    <property type="protein sequence ID" value="ACS90890.1"/>
    <property type="molecule type" value="Genomic_DNA"/>
</dbReference>
<dbReference type="RefSeq" id="WP_015850106.1">
    <property type="nucleotide sequence ID" value="NC_012883.1"/>
</dbReference>
<dbReference type="SMR" id="C6A5J5"/>
<dbReference type="STRING" id="604354.TSIB_1839"/>
<dbReference type="GeneID" id="8096850"/>
<dbReference type="KEGG" id="tsi:TSIB_1839"/>
<dbReference type="eggNOG" id="arCOG01183">
    <property type="taxonomic scope" value="Archaea"/>
</dbReference>
<dbReference type="HOGENOM" id="CLU_023208_2_2_2"/>
<dbReference type="OrthoDB" id="6818at2157"/>
<dbReference type="Proteomes" id="UP000009079">
    <property type="component" value="Chromosome"/>
</dbReference>
<dbReference type="GO" id="GO:0005737">
    <property type="term" value="C:cytoplasm"/>
    <property type="evidence" value="ECO:0007669"/>
    <property type="project" value="UniProtKB-SubCell"/>
</dbReference>
<dbReference type="GO" id="GO:0000408">
    <property type="term" value="C:EKC/KEOPS complex"/>
    <property type="evidence" value="ECO:0007669"/>
    <property type="project" value="InterPro"/>
</dbReference>
<dbReference type="GO" id="GO:0005506">
    <property type="term" value="F:iron ion binding"/>
    <property type="evidence" value="ECO:0007669"/>
    <property type="project" value="UniProtKB-UniRule"/>
</dbReference>
<dbReference type="GO" id="GO:0061711">
    <property type="term" value="F:N(6)-L-threonylcarbamoyladenine synthase activity"/>
    <property type="evidence" value="ECO:0007669"/>
    <property type="project" value="UniProtKB-EC"/>
</dbReference>
<dbReference type="GO" id="GO:0002949">
    <property type="term" value="P:tRNA threonylcarbamoyladenosine modification"/>
    <property type="evidence" value="ECO:0007669"/>
    <property type="project" value="UniProtKB-UniRule"/>
</dbReference>
<dbReference type="CDD" id="cd24131">
    <property type="entry name" value="ASKHA_NBD_Kae1_arch_bac"/>
    <property type="match status" value="1"/>
</dbReference>
<dbReference type="FunFam" id="3.30.420.40:FF:000038">
    <property type="entry name" value="Probable tRNA N6-adenosine threonylcarbamoyltransferase"/>
    <property type="match status" value="1"/>
</dbReference>
<dbReference type="Gene3D" id="3.30.420.40">
    <property type="match status" value="2"/>
</dbReference>
<dbReference type="HAMAP" id="MF_01446">
    <property type="entry name" value="Kae1"/>
    <property type="match status" value="1"/>
</dbReference>
<dbReference type="InterPro" id="IPR043129">
    <property type="entry name" value="ATPase_NBD"/>
</dbReference>
<dbReference type="InterPro" id="IPR000905">
    <property type="entry name" value="Gcp-like_dom"/>
</dbReference>
<dbReference type="InterPro" id="IPR017861">
    <property type="entry name" value="KAE1/TsaD"/>
</dbReference>
<dbReference type="InterPro" id="IPR034680">
    <property type="entry name" value="Kae1_archaea_euk"/>
</dbReference>
<dbReference type="InterPro" id="IPR017860">
    <property type="entry name" value="Peptidase_M22_CS"/>
</dbReference>
<dbReference type="NCBIfam" id="TIGR03722">
    <property type="entry name" value="arch_KAE1"/>
    <property type="match status" value="1"/>
</dbReference>
<dbReference type="NCBIfam" id="TIGR00329">
    <property type="entry name" value="gcp_kae1"/>
    <property type="match status" value="1"/>
</dbReference>
<dbReference type="NCBIfam" id="NF007174">
    <property type="entry name" value="PRK09605.1"/>
    <property type="match status" value="1"/>
</dbReference>
<dbReference type="PANTHER" id="PTHR11735">
    <property type="entry name" value="TRNA N6-ADENOSINE THREONYLCARBAMOYLTRANSFERASE"/>
    <property type="match status" value="1"/>
</dbReference>
<dbReference type="PANTHER" id="PTHR11735:SF14">
    <property type="entry name" value="TRNA N6-ADENOSINE THREONYLCARBAMOYLTRANSFERASE"/>
    <property type="match status" value="1"/>
</dbReference>
<dbReference type="Pfam" id="PF00814">
    <property type="entry name" value="TsaD"/>
    <property type="match status" value="1"/>
</dbReference>
<dbReference type="PRINTS" id="PR00789">
    <property type="entry name" value="OSIALOPTASE"/>
</dbReference>
<dbReference type="SUPFAM" id="SSF53067">
    <property type="entry name" value="Actin-like ATPase domain"/>
    <property type="match status" value="1"/>
</dbReference>
<dbReference type="PROSITE" id="PS01016">
    <property type="entry name" value="GLYCOPROTEASE"/>
    <property type="match status" value="1"/>
</dbReference>
<name>KAE1_THESM</name>
<organism>
    <name type="scientific">Thermococcus sibiricus (strain DSM 12597 / MM 739)</name>
    <dbReference type="NCBI Taxonomy" id="604354"/>
    <lineage>
        <taxon>Archaea</taxon>
        <taxon>Methanobacteriati</taxon>
        <taxon>Methanobacteriota</taxon>
        <taxon>Thermococci</taxon>
        <taxon>Thermococcales</taxon>
        <taxon>Thermococcaceae</taxon>
        <taxon>Thermococcus</taxon>
    </lineage>
</organism>
<keyword id="KW-0012">Acyltransferase</keyword>
<keyword id="KW-0963">Cytoplasm</keyword>
<keyword id="KW-0408">Iron</keyword>
<keyword id="KW-0479">Metal-binding</keyword>
<keyword id="KW-1185">Reference proteome</keyword>
<keyword id="KW-0808">Transferase</keyword>
<keyword id="KW-0819">tRNA processing</keyword>
<protein>
    <recommendedName>
        <fullName evidence="1">tRNA N6-adenosine threonylcarbamoyltransferase</fullName>
        <ecNumber evidence="1">2.3.1.234</ecNumber>
    </recommendedName>
    <alternativeName>
        <fullName evidence="1">N6-L-threonylcarbamoyladenine synthase</fullName>
        <shortName evidence="1">t(6)A synthase</shortName>
    </alternativeName>
    <alternativeName>
        <fullName evidence="1">t(6)A37 threonylcarbamoyladenosine biosynthesis protein Kae1</fullName>
    </alternativeName>
    <alternativeName>
        <fullName evidence="1">tRNA threonylcarbamoyladenosine biosynthesis protein Kae1</fullName>
    </alternativeName>
</protein>
<reference key="1">
    <citation type="journal article" date="2009" name="Appl. Environ. Microbiol.">
        <title>Metabolic versatility and indigenous origin of the archaeon Thermococcus sibiricus, isolated from a siberian oil reservoir, as revealed by genome analysis.</title>
        <authorList>
            <person name="Mardanov A.V."/>
            <person name="Ravin N.V."/>
            <person name="Svetlitchnyi V.A."/>
            <person name="Beletsky A.V."/>
            <person name="Miroshnichenko M.L."/>
            <person name="Bonch-Osmolovskaya E.A."/>
            <person name="Skryabin K.G."/>
        </authorList>
    </citation>
    <scope>NUCLEOTIDE SEQUENCE [LARGE SCALE GENOMIC DNA]</scope>
    <source>
        <strain>DSM 12597 / MM 739</strain>
    </source>
</reference>
<sequence>MIALGIEGTAHTLGIGIVTEDKVLANVFNTLTTEKGGIHPKEAAEHHAKLLRPLLKKALQEAKVNIKDVDVIAFSQGPGLGPALRVVATAARALALRYNKPIVGVNHCIAHVEVTKMFGIKDPVGLYVSGGNTQILALEGGRYRVFGETLDIGIGNAIDTFAREIGLGFPGGPKIEKLAQRGEKYIELPYTVKGMDLSFSGILTEAVRKYKTGKYKLEDIAYSFQETAFAALIEVTERAVAHTGKEEVVLVGGVAANNRLREMLKTMSEERSIKFFVPPYDLCRDNGAMIAYNGLRMFKAGIRFNIEETIVKQKFRTDEMEVTW</sequence>
<feature type="chain" id="PRO_1000215320" description="tRNA N6-adenosine threonylcarbamoyltransferase">
    <location>
        <begin position="1"/>
        <end position="324"/>
    </location>
</feature>
<feature type="binding site" evidence="1">
    <location>
        <position position="107"/>
    </location>
    <ligand>
        <name>Fe cation</name>
        <dbReference type="ChEBI" id="CHEBI:24875"/>
    </ligand>
</feature>
<feature type="binding site" evidence="1">
    <location>
        <position position="111"/>
    </location>
    <ligand>
        <name>Fe cation</name>
        <dbReference type="ChEBI" id="CHEBI:24875"/>
    </ligand>
</feature>
<feature type="binding site" evidence="1">
    <location>
        <begin position="127"/>
        <end position="131"/>
    </location>
    <ligand>
        <name>substrate</name>
    </ligand>
</feature>
<feature type="binding site" evidence="1">
    <location>
        <position position="127"/>
    </location>
    <ligand>
        <name>Fe cation</name>
        <dbReference type="ChEBI" id="CHEBI:24875"/>
    </ligand>
</feature>
<feature type="binding site" evidence="1">
    <location>
        <position position="159"/>
    </location>
    <ligand>
        <name>substrate</name>
    </ligand>
</feature>
<feature type="binding site" evidence="1">
    <location>
        <position position="172"/>
    </location>
    <ligand>
        <name>substrate</name>
    </ligand>
</feature>
<feature type="binding site" evidence="1">
    <location>
        <position position="176"/>
    </location>
    <ligand>
        <name>substrate</name>
    </ligand>
</feature>
<feature type="binding site" evidence="1">
    <location>
        <position position="257"/>
    </location>
    <ligand>
        <name>substrate</name>
    </ligand>
</feature>
<feature type="binding site" evidence="1">
    <location>
        <position position="285"/>
    </location>
    <ligand>
        <name>Fe cation</name>
        <dbReference type="ChEBI" id="CHEBI:24875"/>
    </ligand>
</feature>
<comment type="function">
    <text evidence="1">Required for the formation of a threonylcarbamoyl group on adenosine at position 37 (t(6)A37) in tRNAs that read codons beginning with adenine. Is a component of the KEOPS complex that is probably involved in the transfer of the threonylcarbamoyl moiety of threonylcarbamoyl-AMP (TC-AMP) to the N6 group of A37. Kae1 likely plays a direct catalytic role in this reaction, but requires other protein(s) of the complex to fulfill this activity.</text>
</comment>
<comment type="catalytic activity">
    <reaction evidence="1">
        <text>L-threonylcarbamoyladenylate + adenosine(37) in tRNA = N(6)-L-threonylcarbamoyladenosine(37) in tRNA + AMP + H(+)</text>
        <dbReference type="Rhea" id="RHEA:37059"/>
        <dbReference type="Rhea" id="RHEA-COMP:10162"/>
        <dbReference type="Rhea" id="RHEA-COMP:10163"/>
        <dbReference type="ChEBI" id="CHEBI:15378"/>
        <dbReference type="ChEBI" id="CHEBI:73682"/>
        <dbReference type="ChEBI" id="CHEBI:74411"/>
        <dbReference type="ChEBI" id="CHEBI:74418"/>
        <dbReference type="ChEBI" id="CHEBI:456215"/>
        <dbReference type="EC" id="2.3.1.234"/>
    </reaction>
</comment>
<comment type="cofactor">
    <cofactor evidence="1">
        <name>Fe(2+)</name>
        <dbReference type="ChEBI" id="CHEBI:29033"/>
    </cofactor>
    <text evidence="1">Binds 1 Fe(2+) ion per subunit.</text>
</comment>
<comment type="subunit">
    <text evidence="1">Monomer. Component of the KEOPS complex that consists of Kae1, Bud32, Cgi121 and Pcc1; the whole complex dimerizes.</text>
</comment>
<comment type="subcellular location">
    <subcellularLocation>
        <location evidence="1">Cytoplasm</location>
    </subcellularLocation>
</comment>
<comment type="similarity">
    <text evidence="1">Belongs to the KAE1 / TsaD family.</text>
</comment>
<accession>C6A5J5</accession>
<evidence type="ECO:0000255" key="1">
    <source>
        <dbReference type="HAMAP-Rule" id="MF_01446"/>
    </source>
</evidence>
<gene>
    <name evidence="1" type="primary">kae1</name>
    <name type="ordered locus">TSIB_1839</name>
</gene>